<evidence type="ECO:0000255" key="1">
    <source>
        <dbReference type="HAMAP-Rule" id="MF_01224"/>
    </source>
</evidence>
<keyword id="KW-0456">Lyase</keyword>
<keyword id="KW-0501">Molybdenum cofactor biosynthesis</keyword>
<accession>B8E478</accession>
<comment type="function">
    <text evidence="1">Catalyzes the conversion of (8S)-3',8-cyclo-7,8-dihydroguanosine 5'-triphosphate to cyclic pyranopterin monophosphate (cPMP).</text>
</comment>
<comment type="catalytic activity">
    <reaction evidence="1">
        <text>(8S)-3',8-cyclo-7,8-dihydroguanosine 5'-triphosphate = cyclic pyranopterin phosphate + diphosphate</text>
        <dbReference type="Rhea" id="RHEA:49580"/>
        <dbReference type="ChEBI" id="CHEBI:33019"/>
        <dbReference type="ChEBI" id="CHEBI:59648"/>
        <dbReference type="ChEBI" id="CHEBI:131766"/>
        <dbReference type="EC" id="4.6.1.17"/>
    </reaction>
</comment>
<comment type="pathway">
    <text evidence="1">Cofactor biosynthesis; molybdopterin biosynthesis.</text>
</comment>
<comment type="subunit">
    <text evidence="1">Homohexamer; trimer of dimers.</text>
</comment>
<comment type="similarity">
    <text evidence="1">Belongs to the MoaC family.</text>
</comment>
<organism>
    <name type="scientific">Shewanella baltica (strain OS223)</name>
    <dbReference type="NCBI Taxonomy" id="407976"/>
    <lineage>
        <taxon>Bacteria</taxon>
        <taxon>Pseudomonadati</taxon>
        <taxon>Pseudomonadota</taxon>
        <taxon>Gammaproteobacteria</taxon>
        <taxon>Alteromonadales</taxon>
        <taxon>Shewanellaceae</taxon>
        <taxon>Shewanella</taxon>
    </lineage>
</organism>
<name>MOAC_SHEB2</name>
<sequence>MSNVFTHINADGNAHMVDVTEKAITEREARAEAFIEMASTTLEMIMSGSHHKGDVFATARIAGIQAAKKTSDLIPLCHPLMLTKVEVDLEAQPEHNRVRITSLCKLSGKTGVEMEALTAASVAALTIYDMCKAVQKDMVISQVRLLEKRGGKSGHFKV</sequence>
<proteinExistence type="inferred from homology"/>
<protein>
    <recommendedName>
        <fullName evidence="1">Cyclic pyranopterin monophosphate synthase</fullName>
        <ecNumber evidence="1">4.6.1.17</ecNumber>
    </recommendedName>
    <alternativeName>
        <fullName evidence="1">Molybdenum cofactor biosynthesis protein C</fullName>
    </alternativeName>
</protein>
<dbReference type="EC" id="4.6.1.17" evidence="1"/>
<dbReference type="EMBL" id="CP001252">
    <property type="protein sequence ID" value="ACK44819.1"/>
    <property type="molecule type" value="Genomic_DNA"/>
</dbReference>
<dbReference type="RefSeq" id="WP_006086547.1">
    <property type="nucleotide sequence ID" value="NC_011663.1"/>
</dbReference>
<dbReference type="SMR" id="B8E478"/>
<dbReference type="GeneID" id="11770637"/>
<dbReference type="KEGG" id="sbp:Sbal223_0282"/>
<dbReference type="HOGENOM" id="CLU_074693_1_1_6"/>
<dbReference type="UniPathway" id="UPA00344"/>
<dbReference type="Proteomes" id="UP000002507">
    <property type="component" value="Chromosome"/>
</dbReference>
<dbReference type="GO" id="GO:0061799">
    <property type="term" value="F:cyclic pyranopterin monophosphate synthase activity"/>
    <property type="evidence" value="ECO:0007669"/>
    <property type="project" value="UniProtKB-UniRule"/>
</dbReference>
<dbReference type="GO" id="GO:0006777">
    <property type="term" value="P:Mo-molybdopterin cofactor biosynthetic process"/>
    <property type="evidence" value="ECO:0007669"/>
    <property type="project" value="UniProtKB-UniRule"/>
</dbReference>
<dbReference type="CDD" id="cd01420">
    <property type="entry name" value="MoaC_PE"/>
    <property type="match status" value="1"/>
</dbReference>
<dbReference type="FunFam" id="3.30.70.640:FF:000001">
    <property type="entry name" value="Cyclic pyranopterin monophosphate synthase"/>
    <property type="match status" value="1"/>
</dbReference>
<dbReference type="Gene3D" id="3.30.70.640">
    <property type="entry name" value="Molybdopterin cofactor biosynthesis C (MoaC) domain"/>
    <property type="match status" value="1"/>
</dbReference>
<dbReference type="HAMAP" id="MF_01224_B">
    <property type="entry name" value="MoaC_B"/>
    <property type="match status" value="1"/>
</dbReference>
<dbReference type="InterPro" id="IPR023045">
    <property type="entry name" value="MoaC"/>
</dbReference>
<dbReference type="InterPro" id="IPR047594">
    <property type="entry name" value="MoaC_bact/euk"/>
</dbReference>
<dbReference type="InterPro" id="IPR036522">
    <property type="entry name" value="MoaC_sf"/>
</dbReference>
<dbReference type="InterPro" id="IPR050105">
    <property type="entry name" value="MoCo_biosynth_MoaA/MoaC"/>
</dbReference>
<dbReference type="InterPro" id="IPR002820">
    <property type="entry name" value="Mopterin_CF_biosynth-C_dom"/>
</dbReference>
<dbReference type="NCBIfam" id="TIGR00581">
    <property type="entry name" value="moaC"/>
    <property type="match status" value="1"/>
</dbReference>
<dbReference type="NCBIfam" id="NF006870">
    <property type="entry name" value="PRK09364.1"/>
    <property type="match status" value="1"/>
</dbReference>
<dbReference type="PANTHER" id="PTHR22960">
    <property type="entry name" value="MOLYBDOPTERIN COFACTOR SYNTHESIS PROTEIN A"/>
    <property type="match status" value="1"/>
</dbReference>
<dbReference type="Pfam" id="PF01967">
    <property type="entry name" value="MoaC"/>
    <property type="match status" value="1"/>
</dbReference>
<dbReference type="SUPFAM" id="SSF55040">
    <property type="entry name" value="Molybdenum cofactor biosynthesis protein C, MoaC"/>
    <property type="match status" value="1"/>
</dbReference>
<feature type="chain" id="PRO_1000164901" description="Cyclic pyranopterin monophosphate synthase">
    <location>
        <begin position="1"/>
        <end position="158"/>
    </location>
</feature>
<feature type="active site" evidence="1">
    <location>
        <position position="129"/>
    </location>
</feature>
<feature type="binding site" evidence="1">
    <location>
        <begin position="76"/>
        <end position="78"/>
    </location>
    <ligand>
        <name>substrate</name>
    </ligand>
</feature>
<feature type="binding site" evidence="1">
    <location>
        <begin position="114"/>
        <end position="115"/>
    </location>
    <ligand>
        <name>substrate</name>
    </ligand>
</feature>
<gene>
    <name evidence="1" type="primary">moaC</name>
    <name type="ordered locus">Sbal223_0282</name>
</gene>
<reference key="1">
    <citation type="submission" date="2008-12" db="EMBL/GenBank/DDBJ databases">
        <title>Complete sequence of chromosome of Shewanella baltica OS223.</title>
        <authorList>
            <consortium name="US DOE Joint Genome Institute"/>
            <person name="Lucas S."/>
            <person name="Copeland A."/>
            <person name="Lapidus A."/>
            <person name="Glavina del Rio T."/>
            <person name="Dalin E."/>
            <person name="Tice H."/>
            <person name="Bruce D."/>
            <person name="Goodwin L."/>
            <person name="Pitluck S."/>
            <person name="Chertkov O."/>
            <person name="Meincke L."/>
            <person name="Brettin T."/>
            <person name="Detter J.C."/>
            <person name="Han C."/>
            <person name="Kuske C.R."/>
            <person name="Larimer F."/>
            <person name="Land M."/>
            <person name="Hauser L."/>
            <person name="Kyrpides N."/>
            <person name="Ovchinnikova G."/>
            <person name="Brettar I."/>
            <person name="Rodrigues J."/>
            <person name="Konstantinidis K."/>
            <person name="Tiedje J."/>
        </authorList>
    </citation>
    <scope>NUCLEOTIDE SEQUENCE [LARGE SCALE GENOMIC DNA]</scope>
    <source>
        <strain>OS223</strain>
    </source>
</reference>